<evidence type="ECO:0000255" key="1">
    <source>
        <dbReference type="HAMAP-Rule" id="MF_00807"/>
    </source>
</evidence>
<proteinExistence type="inferred from homology"/>
<sequence>MNLQRFPRYPLTFGPTPIQPLKRLSAHLGGKVDLYAKREDCNSGLAFGGNKTRKLEYLVPDALAQGADTLVSIGGVQSNQTRQVAAVAAHLGMKCVLVQEHWVNYEDPVYDRVGNIQLSRMMGADVRLVSDGFDIGIRRSWEEAMESVRQAGGKPYPIPAGCSEHPLGGLGFVGFAEEVRAQEAQLGFKFDYVVVCSVTGSTQAGMVVGFAADGRADRVIGIDASAKPEQTREQITRIARHTAELVELGRDIVEQDVVLDTRYGGPEYGLPSDGTLEAIRLCARLEGMLTDPVYEGKSMHGMIDKVRLGEFEPGSKVLYAHLGGAPALSAYNGIFRNG</sequence>
<accession>Q1BL32</accession>
<dbReference type="EC" id="3.5.99.7" evidence="1"/>
<dbReference type="EMBL" id="CP000379">
    <property type="protein sequence ID" value="ABF79673.1"/>
    <property type="molecule type" value="Genomic_DNA"/>
</dbReference>
<dbReference type="SMR" id="Q1BL32"/>
<dbReference type="HOGENOM" id="CLU_048897_2_1_4"/>
<dbReference type="GO" id="GO:0008660">
    <property type="term" value="F:1-aminocyclopropane-1-carboxylate deaminase activity"/>
    <property type="evidence" value="ECO:0007669"/>
    <property type="project" value="UniProtKB-UniRule"/>
</dbReference>
<dbReference type="GO" id="GO:0019148">
    <property type="term" value="F:D-cysteine desulfhydrase activity"/>
    <property type="evidence" value="ECO:0007669"/>
    <property type="project" value="TreeGrafter"/>
</dbReference>
<dbReference type="GO" id="GO:0030170">
    <property type="term" value="F:pyridoxal phosphate binding"/>
    <property type="evidence" value="ECO:0007669"/>
    <property type="project" value="InterPro"/>
</dbReference>
<dbReference type="GO" id="GO:0018871">
    <property type="term" value="P:1-aminocyclopropane-1-carboxylate metabolic process"/>
    <property type="evidence" value="ECO:0007669"/>
    <property type="project" value="UniProtKB-UniRule"/>
</dbReference>
<dbReference type="GO" id="GO:0009310">
    <property type="term" value="P:amine catabolic process"/>
    <property type="evidence" value="ECO:0007669"/>
    <property type="project" value="InterPro"/>
</dbReference>
<dbReference type="CDD" id="cd06449">
    <property type="entry name" value="ACCD"/>
    <property type="match status" value="1"/>
</dbReference>
<dbReference type="FunFam" id="3.40.50.1100:FF:000048">
    <property type="entry name" value="1-aminocyclopropane-1-carboxylate deaminase"/>
    <property type="match status" value="1"/>
</dbReference>
<dbReference type="Gene3D" id="3.40.50.1100">
    <property type="match status" value="2"/>
</dbReference>
<dbReference type="HAMAP" id="MF_00807">
    <property type="entry name" value="ACC_deaminase"/>
    <property type="match status" value="1"/>
</dbReference>
<dbReference type="InterPro" id="IPR027278">
    <property type="entry name" value="ACCD_DCysDesulf"/>
</dbReference>
<dbReference type="InterPro" id="IPR005965">
    <property type="entry name" value="ACP_carboxylate_deaminase"/>
</dbReference>
<dbReference type="InterPro" id="IPR020601">
    <property type="entry name" value="ACP_carboxylate_deaminase_bac"/>
</dbReference>
<dbReference type="InterPro" id="IPR001926">
    <property type="entry name" value="TrpB-like_PALP"/>
</dbReference>
<dbReference type="InterPro" id="IPR036052">
    <property type="entry name" value="TrpB-like_PALP_sf"/>
</dbReference>
<dbReference type="NCBIfam" id="TIGR01274">
    <property type="entry name" value="ACC_deam"/>
    <property type="match status" value="1"/>
</dbReference>
<dbReference type="PANTHER" id="PTHR43780">
    <property type="entry name" value="1-AMINOCYCLOPROPANE-1-CARBOXYLATE DEAMINASE-RELATED"/>
    <property type="match status" value="1"/>
</dbReference>
<dbReference type="PANTHER" id="PTHR43780:SF2">
    <property type="entry name" value="1-AMINOCYCLOPROPANE-1-CARBOXYLATE DEAMINASE-RELATED"/>
    <property type="match status" value="1"/>
</dbReference>
<dbReference type="Pfam" id="PF00291">
    <property type="entry name" value="PALP"/>
    <property type="match status" value="1"/>
</dbReference>
<dbReference type="PIRSF" id="PIRSF006278">
    <property type="entry name" value="ACCD_DCysDesulf"/>
    <property type="match status" value="1"/>
</dbReference>
<dbReference type="SUPFAM" id="SSF53686">
    <property type="entry name" value="Tryptophan synthase beta subunit-like PLP-dependent enzymes"/>
    <property type="match status" value="1"/>
</dbReference>
<protein>
    <recommendedName>
        <fullName evidence="1">1-aminocyclopropane-1-carboxylate deaminase</fullName>
        <shortName evidence="1">ACC deaminase</shortName>
        <shortName evidence="1">ACCD</shortName>
        <ecNumber evidence="1">3.5.99.7</ecNumber>
    </recommendedName>
</protein>
<reference key="1">
    <citation type="submission" date="2006-05" db="EMBL/GenBank/DDBJ databases">
        <title>Complete sequence of chromosome 2 of Burkholderia cenocepacia AU 1054.</title>
        <authorList>
            <consortium name="US DOE Joint Genome Institute"/>
            <person name="Copeland A."/>
            <person name="Lucas S."/>
            <person name="Lapidus A."/>
            <person name="Barry K."/>
            <person name="Detter J.C."/>
            <person name="Glavina del Rio T."/>
            <person name="Hammon N."/>
            <person name="Israni S."/>
            <person name="Dalin E."/>
            <person name="Tice H."/>
            <person name="Pitluck S."/>
            <person name="Chain P."/>
            <person name="Malfatti S."/>
            <person name="Shin M."/>
            <person name="Vergez L."/>
            <person name="Schmutz J."/>
            <person name="Larimer F."/>
            <person name="Land M."/>
            <person name="Hauser L."/>
            <person name="Kyrpides N."/>
            <person name="Lykidis A."/>
            <person name="LiPuma J.J."/>
            <person name="Konstantinidis K."/>
            <person name="Tiedje J.M."/>
            <person name="Richardson P."/>
        </authorList>
    </citation>
    <scope>NUCLEOTIDE SEQUENCE [LARGE SCALE GENOMIC DNA]</scope>
    <source>
        <strain>AU 1054</strain>
    </source>
</reference>
<feature type="chain" id="PRO_0000304370" description="1-aminocyclopropane-1-carboxylate deaminase">
    <location>
        <begin position="1"/>
        <end position="338"/>
    </location>
</feature>
<feature type="active site" description="Nucleophile" evidence="1">
    <location>
        <position position="78"/>
    </location>
</feature>
<feature type="modified residue" description="N6-(pyridoxal phosphate)lysine" evidence="1">
    <location>
        <position position="51"/>
    </location>
</feature>
<organism>
    <name type="scientific">Burkholderia orbicola (strain AU 1054)</name>
    <dbReference type="NCBI Taxonomy" id="331271"/>
    <lineage>
        <taxon>Bacteria</taxon>
        <taxon>Pseudomonadati</taxon>
        <taxon>Pseudomonadota</taxon>
        <taxon>Betaproteobacteria</taxon>
        <taxon>Burkholderiales</taxon>
        <taxon>Burkholderiaceae</taxon>
        <taxon>Burkholderia</taxon>
        <taxon>Burkholderia cepacia complex</taxon>
        <taxon>Burkholderia orbicola</taxon>
    </lineage>
</organism>
<gene>
    <name evidence="1" type="primary">acdS</name>
    <name type="ordered locus">Bcen_4794</name>
</gene>
<keyword id="KW-0378">Hydrolase</keyword>
<keyword id="KW-0663">Pyridoxal phosphate</keyword>
<name>1A1D_BURO1</name>
<comment type="function">
    <text evidence="1">Catalyzes a cyclopropane ring-opening reaction, the irreversible conversion of 1-aminocyclopropane-1-carboxylate (ACC) to ammonia and alpha-ketobutyrate. Allows growth on ACC as a nitrogen source.</text>
</comment>
<comment type="catalytic activity">
    <reaction evidence="1">
        <text>1-aminocyclopropane-1-carboxylate + H2O = 2-oxobutanoate + NH4(+)</text>
        <dbReference type="Rhea" id="RHEA:16933"/>
        <dbReference type="ChEBI" id="CHEBI:15377"/>
        <dbReference type="ChEBI" id="CHEBI:16763"/>
        <dbReference type="ChEBI" id="CHEBI:28938"/>
        <dbReference type="ChEBI" id="CHEBI:58360"/>
        <dbReference type="EC" id="3.5.99.7"/>
    </reaction>
</comment>
<comment type="cofactor">
    <cofactor evidence="1">
        <name>pyridoxal 5'-phosphate</name>
        <dbReference type="ChEBI" id="CHEBI:597326"/>
    </cofactor>
</comment>
<comment type="subunit">
    <text evidence="1">Homotrimer.</text>
</comment>
<comment type="similarity">
    <text evidence="1">Belongs to the ACC deaminase/D-cysteine desulfhydrase family.</text>
</comment>